<comment type="function">
    <text evidence="1">Specifically methylates position 2 of adenine 2503 in 23S rRNA and position 2 of adenine 37 in tRNAs.</text>
</comment>
<comment type="catalytic activity">
    <reaction evidence="1">
        <text>adenosine(2503) in 23S rRNA + 2 reduced [2Fe-2S]-[ferredoxin] + 2 S-adenosyl-L-methionine = 2-methyladenosine(2503) in 23S rRNA + 5'-deoxyadenosine + L-methionine + 2 oxidized [2Fe-2S]-[ferredoxin] + S-adenosyl-L-homocysteine</text>
        <dbReference type="Rhea" id="RHEA:42916"/>
        <dbReference type="Rhea" id="RHEA-COMP:10000"/>
        <dbReference type="Rhea" id="RHEA-COMP:10001"/>
        <dbReference type="Rhea" id="RHEA-COMP:10152"/>
        <dbReference type="Rhea" id="RHEA-COMP:10282"/>
        <dbReference type="ChEBI" id="CHEBI:17319"/>
        <dbReference type="ChEBI" id="CHEBI:33737"/>
        <dbReference type="ChEBI" id="CHEBI:33738"/>
        <dbReference type="ChEBI" id="CHEBI:57844"/>
        <dbReference type="ChEBI" id="CHEBI:57856"/>
        <dbReference type="ChEBI" id="CHEBI:59789"/>
        <dbReference type="ChEBI" id="CHEBI:74411"/>
        <dbReference type="ChEBI" id="CHEBI:74497"/>
        <dbReference type="EC" id="2.1.1.192"/>
    </reaction>
</comment>
<comment type="catalytic activity">
    <reaction evidence="1">
        <text>adenosine(37) in tRNA + 2 reduced [2Fe-2S]-[ferredoxin] + 2 S-adenosyl-L-methionine = 2-methyladenosine(37) in tRNA + 5'-deoxyadenosine + L-methionine + 2 oxidized [2Fe-2S]-[ferredoxin] + S-adenosyl-L-homocysteine</text>
        <dbReference type="Rhea" id="RHEA:43332"/>
        <dbReference type="Rhea" id="RHEA-COMP:10000"/>
        <dbReference type="Rhea" id="RHEA-COMP:10001"/>
        <dbReference type="Rhea" id="RHEA-COMP:10162"/>
        <dbReference type="Rhea" id="RHEA-COMP:10485"/>
        <dbReference type="ChEBI" id="CHEBI:17319"/>
        <dbReference type="ChEBI" id="CHEBI:33737"/>
        <dbReference type="ChEBI" id="CHEBI:33738"/>
        <dbReference type="ChEBI" id="CHEBI:57844"/>
        <dbReference type="ChEBI" id="CHEBI:57856"/>
        <dbReference type="ChEBI" id="CHEBI:59789"/>
        <dbReference type="ChEBI" id="CHEBI:74411"/>
        <dbReference type="ChEBI" id="CHEBI:74497"/>
        <dbReference type="EC" id="2.1.1.192"/>
    </reaction>
</comment>
<comment type="cofactor">
    <cofactor evidence="1">
        <name>[4Fe-4S] cluster</name>
        <dbReference type="ChEBI" id="CHEBI:49883"/>
    </cofactor>
    <text evidence="1">Binds 1 [4Fe-4S] cluster. The cluster is coordinated with 3 cysteines and an exchangeable S-adenosyl-L-methionine.</text>
</comment>
<comment type="subcellular location">
    <subcellularLocation>
        <location evidence="1">Cytoplasm</location>
    </subcellularLocation>
</comment>
<comment type="miscellaneous">
    <text evidence="1">Reaction proceeds by a ping-pong mechanism involving intermediate methylation of a conserved cysteine residue.</text>
</comment>
<comment type="similarity">
    <text evidence="1">Belongs to the radical SAM superfamily. RlmN family.</text>
</comment>
<reference key="1">
    <citation type="submission" date="2005-03" db="EMBL/GenBank/DDBJ databases">
        <title>Comparison of the complete genome sequences of Rhodococcus erythropolis PR4 and Rhodococcus opacus B4.</title>
        <authorList>
            <person name="Takarada H."/>
            <person name="Sekine M."/>
            <person name="Hosoyama A."/>
            <person name="Yamada R."/>
            <person name="Fujisawa T."/>
            <person name="Omata S."/>
            <person name="Shimizu A."/>
            <person name="Tsukatani N."/>
            <person name="Tanikawa S."/>
            <person name="Fujita N."/>
            <person name="Harayama S."/>
        </authorList>
    </citation>
    <scope>NUCLEOTIDE SEQUENCE [LARGE SCALE GENOMIC DNA]</scope>
    <source>
        <strain>PR4 / NBRC 100887</strain>
    </source>
</reference>
<proteinExistence type="inferred from homology"/>
<evidence type="ECO:0000255" key="1">
    <source>
        <dbReference type="HAMAP-Rule" id="MF_01849"/>
    </source>
</evidence>
<evidence type="ECO:0000255" key="2">
    <source>
        <dbReference type="PROSITE-ProRule" id="PRU01266"/>
    </source>
</evidence>
<dbReference type="EC" id="2.1.1.192" evidence="1"/>
<dbReference type="EMBL" id="AP008957">
    <property type="protein sequence ID" value="BAH33258.1"/>
    <property type="molecule type" value="Genomic_DNA"/>
</dbReference>
<dbReference type="RefSeq" id="WP_019747992.1">
    <property type="nucleotide sequence ID" value="NC_012490.1"/>
</dbReference>
<dbReference type="SMR" id="C0ZY23"/>
<dbReference type="GeneID" id="57487468"/>
<dbReference type="KEGG" id="rer:RER_25500"/>
<dbReference type="eggNOG" id="COG0820">
    <property type="taxonomic scope" value="Bacteria"/>
</dbReference>
<dbReference type="HOGENOM" id="CLU_029101_0_2_11"/>
<dbReference type="Proteomes" id="UP000002204">
    <property type="component" value="Chromosome"/>
</dbReference>
<dbReference type="GO" id="GO:0005737">
    <property type="term" value="C:cytoplasm"/>
    <property type="evidence" value="ECO:0007669"/>
    <property type="project" value="UniProtKB-SubCell"/>
</dbReference>
<dbReference type="GO" id="GO:0051539">
    <property type="term" value="F:4 iron, 4 sulfur cluster binding"/>
    <property type="evidence" value="ECO:0007669"/>
    <property type="project" value="UniProtKB-UniRule"/>
</dbReference>
<dbReference type="GO" id="GO:0046872">
    <property type="term" value="F:metal ion binding"/>
    <property type="evidence" value="ECO:0007669"/>
    <property type="project" value="UniProtKB-KW"/>
</dbReference>
<dbReference type="GO" id="GO:0070040">
    <property type="term" value="F:rRNA (adenine(2503)-C2-)-methyltransferase activity"/>
    <property type="evidence" value="ECO:0007669"/>
    <property type="project" value="UniProtKB-UniRule"/>
</dbReference>
<dbReference type="GO" id="GO:0019843">
    <property type="term" value="F:rRNA binding"/>
    <property type="evidence" value="ECO:0007669"/>
    <property type="project" value="UniProtKB-UniRule"/>
</dbReference>
<dbReference type="GO" id="GO:0002935">
    <property type="term" value="F:tRNA (adenine(37)-C2)-methyltransferase activity"/>
    <property type="evidence" value="ECO:0007669"/>
    <property type="project" value="UniProtKB-UniRule"/>
</dbReference>
<dbReference type="GO" id="GO:0000049">
    <property type="term" value="F:tRNA binding"/>
    <property type="evidence" value="ECO:0007669"/>
    <property type="project" value="UniProtKB-UniRule"/>
</dbReference>
<dbReference type="GO" id="GO:0070475">
    <property type="term" value="P:rRNA base methylation"/>
    <property type="evidence" value="ECO:0007669"/>
    <property type="project" value="UniProtKB-UniRule"/>
</dbReference>
<dbReference type="GO" id="GO:0030488">
    <property type="term" value="P:tRNA methylation"/>
    <property type="evidence" value="ECO:0007669"/>
    <property type="project" value="UniProtKB-UniRule"/>
</dbReference>
<dbReference type="CDD" id="cd01335">
    <property type="entry name" value="Radical_SAM"/>
    <property type="match status" value="1"/>
</dbReference>
<dbReference type="FunFam" id="3.20.20.70:FF:000014">
    <property type="entry name" value="Probable dual-specificity RNA methyltransferase RlmN"/>
    <property type="match status" value="1"/>
</dbReference>
<dbReference type="Gene3D" id="1.10.150.530">
    <property type="match status" value="1"/>
</dbReference>
<dbReference type="Gene3D" id="3.20.20.70">
    <property type="entry name" value="Aldolase class I"/>
    <property type="match status" value="1"/>
</dbReference>
<dbReference type="HAMAP" id="MF_01849">
    <property type="entry name" value="RNA_methyltr_RlmN"/>
    <property type="match status" value="1"/>
</dbReference>
<dbReference type="InterPro" id="IPR013785">
    <property type="entry name" value="Aldolase_TIM"/>
</dbReference>
<dbReference type="InterPro" id="IPR040072">
    <property type="entry name" value="Methyltransferase_A"/>
</dbReference>
<dbReference type="InterPro" id="IPR048641">
    <property type="entry name" value="RlmN_N"/>
</dbReference>
<dbReference type="InterPro" id="IPR027492">
    <property type="entry name" value="RNA_MTrfase_RlmN"/>
</dbReference>
<dbReference type="InterPro" id="IPR004383">
    <property type="entry name" value="rRNA_lsu_MTrfase_RlmN/Cfr"/>
</dbReference>
<dbReference type="InterPro" id="IPR007197">
    <property type="entry name" value="rSAM"/>
</dbReference>
<dbReference type="NCBIfam" id="TIGR00048">
    <property type="entry name" value="rRNA_mod_RlmN"/>
    <property type="match status" value="1"/>
</dbReference>
<dbReference type="PANTHER" id="PTHR30544">
    <property type="entry name" value="23S RRNA METHYLTRANSFERASE"/>
    <property type="match status" value="1"/>
</dbReference>
<dbReference type="PANTHER" id="PTHR30544:SF5">
    <property type="entry name" value="RADICAL SAM CORE DOMAIN-CONTAINING PROTEIN"/>
    <property type="match status" value="1"/>
</dbReference>
<dbReference type="Pfam" id="PF04055">
    <property type="entry name" value="Radical_SAM"/>
    <property type="match status" value="1"/>
</dbReference>
<dbReference type="Pfam" id="PF21016">
    <property type="entry name" value="RlmN_N"/>
    <property type="match status" value="1"/>
</dbReference>
<dbReference type="PIRSF" id="PIRSF006004">
    <property type="entry name" value="CHP00048"/>
    <property type="match status" value="1"/>
</dbReference>
<dbReference type="SFLD" id="SFLDF00275">
    <property type="entry name" value="adenosine_C2_methyltransferase"/>
    <property type="match status" value="1"/>
</dbReference>
<dbReference type="SFLD" id="SFLDG01062">
    <property type="entry name" value="methyltransferase_(Class_A)"/>
    <property type="match status" value="1"/>
</dbReference>
<dbReference type="SUPFAM" id="SSF102114">
    <property type="entry name" value="Radical SAM enzymes"/>
    <property type="match status" value="1"/>
</dbReference>
<dbReference type="PROSITE" id="PS51918">
    <property type="entry name" value="RADICAL_SAM"/>
    <property type="match status" value="1"/>
</dbReference>
<name>RLMN_RHOE4</name>
<organism>
    <name type="scientific">Rhodococcus erythropolis (strain PR4 / NBRC 100887)</name>
    <dbReference type="NCBI Taxonomy" id="234621"/>
    <lineage>
        <taxon>Bacteria</taxon>
        <taxon>Bacillati</taxon>
        <taxon>Actinomycetota</taxon>
        <taxon>Actinomycetes</taxon>
        <taxon>Mycobacteriales</taxon>
        <taxon>Nocardiaceae</taxon>
        <taxon>Rhodococcus</taxon>
        <taxon>Rhodococcus erythropolis group</taxon>
    </lineage>
</organism>
<feature type="chain" id="PRO_1000216126" description="Probable dual-specificity RNA methyltransferase RlmN">
    <location>
        <begin position="1"/>
        <end position="369"/>
    </location>
</feature>
<feature type="domain" description="Radical SAM core" evidence="2">
    <location>
        <begin position="114"/>
        <end position="351"/>
    </location>
</feature>
<feature type="active site" description="Proton acceptor" evidence="1">
    <location>
        <position position="108"/>
    </location>
</feature>
<feature type="active site" description="S-methylcysteine intermediate" evidence="1">
    <location>
        <position position="362"/>
    </location>
</feature>
<feature type="binding site" evidence="1">
    <location>
        <position position="128"/>
    </location>
    <ligand>
        <name>[4Fe-4S] cluster</name>
        <dbReference type="ChEBI" id="CHEBI:49883"/>
        <note>4Fe-4S-S-AdoMet</note>
    </ligand>
</feature>
<feature type="binding site" evidence="1">
    <location>
        <position position="132"/>
    </location>
    <ligand>
        <name>[4Fe-4S] cluster</name>
        <dbReference type="ChEBI" id="CHEBI:49883"/>
        <note>4Fe-4S-S-AdoMet</note>
    </ligand>
</feature>
<feature type="binding site" evidence="1">
    <location>
        <position position="135"/>
    </location>
    <ligand>
        <name>[4Fe-4S] cluster</name>
        <dbReference type="ChEBI" id="CHEBI:49883"/>
        <note>4Fe-4S-S-AdoMet</note>
    </ligand>
</feature>
<feature type="binding site" evidence="1">
    <location>
        <begin position="183"/>
        <end position="184"/>
    </location>
    <ligand>
        <name>S-adenosyl-L-methionine</name>
        <dbReference type="ChEBI" id="CHEBI:59789"/>
    </ligand>
</feature>
<feature type="binding site" evidence="1">
    <location>
        <position position="217"/>
    </location>
    <ligand>
        <name>S-adenosyl-L-methionine</name>
        <dbReference type="ChEBI" id="CHEBI:59789"/>
    </ligand>
</feature>
<feature type="binding site" evidence="1">
    <location>
        <begin position="240"/>
        <end position="242"/>
    </location>
    <ligand>
        <name>S-adenosyl-L-methionine</name>
        <dbReference type="ChEBI" id="CHEBI:59789"/>
    </ligand>
</feature>
<feature type="binding site" evidence="1">
    <location>
        <position position="319"/>
    </location>
    <ligand>
        <name>S-adenosyl-L-methionine</name>
        <dbReference type="ChEBI" id="CHEBI:59789"/>
    </ligand>
</feature>
<feature type="disulfide bond" description="(transient)" evidence="1">
    <location>
        <begin position="121"/>
        <end position="362"/>
    </location>
</feature>
<gene>
    <name evidence="1" type="primary">rlmN</name>
    <name type="ordered locus">RER_25500</name>
</gene>
<accession>C0ZY23</accession>
<protein>
    <recommendedName>
        <fullName evidence="1">Probable dual-specificity RNA methyltransferase RlmN</fullName>
        <ecNumber evidence="1">2.1.1.192</ecNumber>
    </recommendedName>
    <alternativeName>
        <fullName evidence="1">23S rRNA (adenine(2503)-C(2))-methyltransferase</fullName>
    </alternativeName>
    <alternativeName>
        <fullName evidence="1">23S rRNA m2A2503 methyltransferase</fullName>
    </alternativeName>
    <alternativeName>
        <fullName evidence="1">Ribosomal RNA large subunit methyltransferase N</fullName>
    </alternativeName>
    <alternativeName>
        <fullName evidence="1">tRNA (adenine(37)-C(2))-methyltransferase</fullName>
    </alternativeName>
    <alternativeName>
        <fullName evidence="1">tRNA m2A37 methyltransferase</fullName>
    </alternativeName>
</protein>
<sequence length="369" mass="39853">MAASLPLVFTAPKRGMPPRHLADLDSAERKEAVKELGLPAFRADQLARQYYARLEADPEKMTDLPASVREKVGESLFPTLLTPIKHLACDSGDTRKTLWKAHDGTLLESVLMRYPDRATLCISSQAGCGMACPFCATGQGGLDRNLSTAEIVDQVREAAAAMRDGDVAGGPGRLSNVVFMGMGEPLANYKRVVAAVRRITSPAPDGLGLSQRSVTVSTVGLAPAIRKLADEGLSVTLAVSLHTPDDELRDTLVPVNNRWSVSEVLQAARYYADKTGRRVSIEYAMIKNVNDQPWRADMLGKKLKKALGGLVHVNLIPLNPTPGSEWDASPKDVEREFVRRVIAQGVSCTVRDTRGQEIAAACGQLAAEN</sequence>
<keyword id="KW-0004">4Fe-4S</keyword>
<keyword id="KW-0963">Cytoplasm</keyword>
<keyword id="KW-1015">Disulfide bond</keyword>
<keyword id="KW-0408">Iron</keyword>
<keyword id="KW-0411">Iron-sulfur</keyword>
<keyword id="KW-0479">Metal-binding</keyword>
<keyword id="KW-0489">Methyltransferase</keyword>
<keyword id="KW-0698">rRNA processing</keyword>
<keyword id="KW-0949">S-adenosyl-L-methionine</keyword>
<keyword id="KW-0808">Transferase</keyword>
<keyword id="KW-0819">tRNA processing</keyword>